<proteinExistence type="inferred from homology"/>
<name>CYB_CROAL</name>
<keyword id="KW-0249">Electron transport</keyword>
<keyword id="KW-0349">Heme</keyword>
<keyword id="KW-0408">Iron</keyword>
<keyword id="KW-0472">Membrane</keyword>
<keyword id="KW-0479">Metal-binding</keyword>
<keyword id="KW-0496">Mitochondrion</keyword>
<keyword id="KW-0999">Mitochondrion inner membrane</keyword>
<keyword id="KW-0679">Respiratory chain</keyword>
<keyword id="KW-0812">Transmembrane</keyword>
<keyword id="KW-1133">Transmembrane helix</keyword>
<keyword id="KW-0813">Transport</keyword>
<keyword id="KW-0830">Ubiquinone</keyword>
<feature type="chain" id="PRO_0000254684" description="Cytochrome b">
    <location>
        <begin position="1"/>
        <end position="379"/>
    </location>
</feature>
<feature type="transmembrane region" description="Helical" evidence="2">
    <location>
        <begin position="33"/>
        <end position="53"/>
    </location>
</feature>
<feature type="transmembrane region" description="Helical" evidence="2">
    <location>
        <begin position="77"/>
        <end position="98"/>
    </location>
</feature>
<feature type="transmembrane region" description="Helical" evidence="2">
    <location>
        <begin position="113"/>
        <end position="133"/>
    </location>
</feature>
<feature type="transmembrane region" description="Helical" evidence="2">
    <location>
        <begin position="178"/>
        <end position="198"/>
    </location>
</feature>
<feature type="transmembrane region" description="Helical" evidence="2">
    <location>
        <begin position="226"/>
        <end position="246"/>
    </location>
</feature>
<feature type="transmembrane region" description="Helical" evidence="2">
    <location>
        <begin position="288"/>
        <end position="308"/>
    </location>
</feature>
<feature type="transmembrane region" description="Helical" evidence="2">
    <location>
        <begin position="320"/>
        <end position="340"/>
    </location>
</feature>
<feature type="transmembrane region" description="Helical" evidence="2">
    <location>
        <begin position="347"/>
        <end position="367"/>
    </location>
</feature>
<feature type="binding site" description="axial binding residue" evidence="2">
    <location>
        <position position="83"/>
    </location>
    <ligand>
        <name>heme b</name>
        <dbReference type="ChEBI" id="CHEBI:60344"/>
        <label>b562</label>
    </ligand>
    <ligandPart>
        <name>Fe</name>
        <dbReference type="ChEBI" id="CHEBI:18248"/>
    </ligandPart>
</feature>
<feature type="binding site" description="axial binding residue" evidence="2">
    <location>
        <position position="97"/>
    </location>
    <ligand>
        <name>heme b</name>
        <dbReference type="ChEBI" id="CHEBI:60344"/>
        <label>b566</label>
    </ligand>
    <ligandPart>
        <name>Fe</name>
        <dbReference type="ChEBI" id="CHEBI:18248"/>
    </ligandPart>
</feature>
<feature type="binding site" description="axial binding residue" evidence="2">
    <location>
        <position position="182"/>
    </location>
    <ligand>
        <name>heme b</name>
        <dbReference type="ChEBI" id="CHEBI:60344"/>
        <label>b562</label>
    </ligand>
    <ligandPart>
        <name>Fe</name>
        <dbReference type="ChEBI" id="CHEBI:18248"/>
    </ligandPart>
</feature>
<feature type="binding site" description="axial binding residue" evidence="2">
    <location>
        <position position="196"/>
    </location>
    <ligand>
        <name>heme b</name>
        <dbReference type="ChEBI" id="CHEBI:60344"/>
        <label>b566</label>
    </ligand>
    <ligandPart>
        <name>Fe</name>
        <dbReference type="ChEBI" id="CHEBI:18248"/>
    </ligandPart>
</feature>
<feature type="binding site" evidence="2">
    <location>
        <position position="201"/>
    </location>
    <ligand>
        <name>a ubiquinone</name>
        <dbReference type="ChEBI" id="CHEBI:16389"/>
    </ligand>
</feature>
<comment type="function">
    <text evidence="2">Component of the ubiquinol-cytochrome c reductase complex (complex III or cytochrome b-c1 complex) that is part of the mitochondrial respiratory chain. The b-c1 complex mediates electron transfer from ubiquinol to cytochrome c. Contributes to the generation of a proton gradient across the mitochondrial membrane that is then used for ATP synthesis.</text>
</comment>
<comment type="cofactor">
    <cofactor evidence="2">
        <name>heme b</name>
        <dbReference type="ChEBI" id="CHEBI:60344"/>
    </cofactor>
    <text evidence="2">Binds 2 heme b groups non-covalently.</text>
</comment>
<comment type="subunit">
    <text evidence="2">The cytochrome bc1 complex contains 11 subunits: 3 respiratory subunits (MT-CYB, CYC1 and UQCRFS1), 2 core proteins (UQCRC1 and UQCRC2) and 6 low-molecular weight proteins (UQCRH/QCR6, UQCRB/QCR7, UQCRQ/QCR8, UQCR10/QCR9, UQCR11/QCR10 and a cleavage product of UQCRFS1). This cytochrome bc1 complex then forms a dimer.</text>
</comment>
<comment type="subcellular location">
    <subcellularLocation>
        <location evidence="2">Mitochondrion inner membrane</location>
        <topology evidence="2">Multi-pass membrane protein</topology>
    </subcellularLocation>
</comment>
<comment type="miscellaneous">
    <text evidence="1">Heme 1 (or BL or b562) is low-potential and absorbs at about 562 nm, and heme 2 (or BH or b566) is high-potential and absorbs at about 566 nm.</text>
</comment>
<comment type="similarity">
    <text evidence="3 4">Belongs to the cytochrome b family.</text>
</comment>
<comment type="caution">
    <text evidence="2">The full-length protein contains only eight transmembrane helices, not nine as predicted by bioinformatics tools.</text>
</comment>
<evidence type="ECO:0000250" key="1"/>
<evidence type="ECO:0000250" key="2">
    <source>
        <dbReference type="UniProtKB" id="P00157"/>
    </source>
</evidence>
<evidence type="ECO:0000255" key="3">
    <source>
        <dbReference type="PROSITE-ProRule" id="PRU00967"/>
    </source>
</evidence>
<evidence type="ECO:0000255" key="4">
    <source>
        <dbReference type="PROSITE-ProRule" id="PRU00968"/>
    </source>
</evidence>
<geneLocation type="mitochondrion"/>
<organism>
    <name type="scientific">Crossarchus alexandri</name>
    <name type="common">Alexander's cusimanse</name>
    <dbReference type="NCBI Taxonomy" id="210643"/>
    <lineage>
        <taxon>Eukaryota</taxon>
        <taxon>Metazoa</taxon>
        <taxon>Chordata</taxon>
        <taxon>Craniata</taxon>
        <taxon>Vertebrata</taxon>
        <taxon>Euteleostomi</taxon>
        <taxon>Mammalia</taxon>
        <taxon>Eutheria</taxon>
        <taxon>Laurasiatheria</taxon>
        <taxon>Carnivora</taxon>
        <taxon>Feliformia</taxon>
        <taxon>Herpestidae</taxon>
        <taxon>Crossarchus</taxon>
    </lineage>
</organism>
<gene>
    <name type="primary">MT-CYB</name>
    <name type="synonym">COB</name>
    <name type="synonym">CYTB</name>
    <name type="synonym">MTCYB</name>
</gene>
<dbReference type="EMBL" id="AF522326">
    <property type="protein sequence ID" value="AAQ08830.1"/>
    <property type="molecule type" value="Genomic_DNA"/>
</dbReference>
<dbReference type="SMR" id="Q71EB0"/>
<dbReference type="GO" id="GO:0005743">
    <property type="term" value="C:mitochondrial inner membrane"/>
    <property type="evidence" value="ECO:0007669"/>
    <property type="project" value="UniProtKB-SubCell"/>
</dbReference>
<dbReference type="GO" id="GO:0045275">
    <property type="term" value="C:respiratory chain complex III"/>
    <property type="evidence" value="ECO:0007669"/>
    <property type="project" value="InterPro"/>
</dbReference>
<dbReference type="GO" id="GO:0046872">
    <property type="term" value="F:metal ion binding"/>
    <property type="evidence" value="ECO:0007669"/>
    <property type="project" value="UniProtKB-KW"/>
</dbReference>
<dbReference type="GO" id="GO:0008121">
    <property type="term" value="F:ubiquinol-cytochrome-c reductase activity"/>
    <property type="evidence" value="ECO:0007669"/>
    <property type="project" value="InterPro"/>
</dbReference>
<dbReference type="GO" id="GO:0006122">
    <property type="term" value="P:mitochondrial electron transport, ubiquinol to cytochrome c"/>
    <property type="evidence" value="ECO:0007669"/>
    <property type="project" value="TreeGrafter"/>
</dbReference>
<dbReference type="CDD" id="cd00290">
    <property type="entry name" value="cytochrome_b_C"/>
    <property type="match status" value="1"/>
</dbReference>
<dbReference type="CDD" id="cd00284">
    <property type="entry name" value="Cytochrome_b_N"/>
    <property type="match status" value="1"/>
</dbReference>
<dbReference type="FunFam" id="1.20.810.10:FF:000002">
    <property type="entry name" value="Cytochrome b"/>
    <property type="match status" value="1"/>
</dbReference>
<dbReference type="Gene3D" id="1.20.810.10">
    <property type="entry name" value="Cytochrome Bc1 Complex, Chain C"/>
    <property type="match status" value="1"/>
</dbReference>
<dbReference type="InterPro" id="IPR005798">
    <property type="entry name" value="Cyt_b/b6_C"/>
</dbReference>
<dbReference type="InterPro" id="IPR036150">
    <property type="entry name" value="Cyt_b/b6_C_sf"/>
</dbReference>
<dbReference type="InterPro" id="IPR005797">
    <property type="entry name" value="Cyt_b/b6_N"/>
</dbReference>
<dbReference type="InterPro" id="IPR027387">
    <property type="entry name" value="Cytb/b6-like_sf"/>
</dbReference>
<dbReference type="InterPro" id="IPR030689">
    <property type="entry name" value="Cytochrome_b"/>
</dbReference>
<dbReference type="InterPro" id="IPR048260">
    <property type="entry name" value="Cytochrome_b_C_euk/bac"/>
</dbReference>
<dbReference type="InterPro" id="IPR048259">
    <property type="entry name" value="Cytochrome_b_N_euk/bac"/>
</dbReference>
<dbReference type="InterPro" id="IPR016174">
    <property type="entry name" value="Di-haem_cyt_TM"/>
</dbReference>
<dbReference type="PANTHER" id="PTHR19271">
    <property type="entry name" value="CYTOCHROME B"/>
    <property type="match status" value="1"/>
</dbReference>
<dbReference type="PANTHER" id="PTHR19271:SF16">
    <property type="entry name" value="CYTOCHROME B"/>
    <property type="match status" value="1"/>
</dbReference>
<dbReference type="Pfam" id="PF00032">
    <property type="entry name" value="Cytochrom_B_C"/>
    <property type="match status" value="1"/>
</dbReference>
<dbReference type="Pfam" id="PF00033">
    <property type="entry name" value="Cytochrome_B"/>
    <property type="match status" value="1"/>
</dbReference>
<dbReference type="PIRSF" id="PIRSF038885">
    <property type="entry name" value="COB"/>
    <property type="match status" value="1"/>
</dbReference>
<dbReference type="SUPFAM" id="SSF81648">
    <property type="entry name" value="a domain/subunit of cytochrome bc1 complex (Ubiquinol-cytochrome c reductase)"/>
    <property type="match status" value="1"/>
</dbReference>
<dbReference type="SUPFAM" id="SSF81342">
    <property type="entry name" value="Transmembrane di-heme cytochromes"/>
    <property type="match status" value="1"/>
</dbReference>
<dbReference type="PROSITE" id="PS51003">
    <property type="entry name" value="CYTB_CTER"/>
    <property type="match status" value="1"/>
</dbReference>
<dbReference type="PROSITE" id="PS51002">
    <property type="entry name" value="CYTB_NTER"/>
    <property type="match status" value="1"/>
</dbReference>
<accession>Q71EB0</accession>
<sequence>MTNIRKRHPLIKIVNESFIDLPTPPNISDWWNFGSLLGVCLVLQILTGLFLAMHYTSDTMTAFSSVTHICRDVNYGWIIRYIHANGASMFFICLFMHVGRGMYYGSYLFMETWNIGILLLFTVMATAFMGYVLPWGQMSFWGATVITNLLSAIPYIGTSLVEWIWGGFSVDKATLTRFFAFHFILPFIISALAVVHLLFLHGTGSNNPSGISSDSDKIPFHPYYTIMEILGLLTMLAMLMILVVFSPDLLGDPDNYTPANPLNTPPHIKPEWYFLFAYAILRSIPNKLGGVLALILSIMILAITPLLHTSNQRSMTFRPLSQCLFWLLVADLLTLTWIGGQPVEHPFIIIGQLASILYFSIILIFMPISGTIENQLLKW</sequence>
<protein>
    <recommendedName>
        <fullName>Cytochrome b</fullName>
    </recommendedName>
    <alternativeName>
        <fullName>Complex III subunit 3</fullName>
    </alternativeName>
    <alternativeName>
        <fullName>Complex III subunit III</fullName>
    </alternativeName>
    <alternativeName>
        <fullName>Cytochrome b-c1 complex subunit 3</fullName>
    </alternativeName>
    <alternativeName>
        <fullName>Ubiquinol-cytochrome-c reductase complex cytochrome b subunit</fullName>
    </alternativeName>
</protein>
<reference key="1">
    <citation type="journal article" date="2004" name="Mol. Phylogenet. Evol.">
        <title>Molecular systematics and origin of sociality in mongooses (Herpestidae, Carnivora).</title>
        <authorList>
            <person name="Veron G."/>
            <person name="Colyn M."/>
            <person name="Dunham A.E."/>
            <person name="Taylor P."/>
            <person name="Gaubert P."/>
        </authorList>
    </citation>
    <scope>NUCLEOTIDE SEQUENCE [GENOMIC DNA]</scope>
</reference>